<reference key="1">
    <citation type="journal article" date="2008" name="PLoS Genet.">
        <title>Complete genome sequence of the N2-fixing broad host range endophyte Klebsiella pneumoniae 342 and virulence predictions verified in mice.</title>
        <authorList>
            <person name="Fouts D.E."/>
            <person name="Tyler H.L."/>
            <person name="DeBoy R.T."/>
            <person name="Daugherty S."/>
            <person name="Ren Q."/>
            <person name="Badger J.H."/>
            <person name="Durkin A.S."/>
            <person name="Huot H."/>
            <person name="Shrivastava S."/>
            <person name="Kothari S."/>
            <person name="Dodson R.J."/>
            <person name="Mohamoud Y."/>
            <person name="Khouri H."/>
            <person name="Roesch L.F.W."/>
            <person name="Krogfelt K.A."/>
            <person name="Struve C."/>
            <person name="Triplett E.W."/>
            <person name="Methe B.A."/>
        </authorList>
    </citation>
    <scope>NUCLEOTIDE SEQUENCE [LARGE SCALE GENOMIC DNA]</scope>
    <source>
        <strain>342</strain>
    </source>
</reference>
<organism>
    <name type="scientific">Klebsiella pneumoniae (strain 342)</name>
    <dbReference type="NCBI Taxonomy" id="507522"/>
    <lineage>
        <taxon>Bacteria</taxon>
        <taxon>Pseudomonadati</taxon>
        <taxon>Pseudomonadota</taxon>
        <taxon>Gammaproteobacteria</taxon>
        <taxon>Enterobacterales</taxon>
        <taxon>Enterobacteriaceae</taxon>
        <taxon>Klebsiella/Raoultella group</taxon>
        <taxon>Klebsiella</taxon>
        <taxon>Klebsiella pneumoniae complex</taxon>
    </lineage>
</organism>
<protein>
    <recommendedName>
        <fullName evidence="1">L-seryl-tRNA(Sec) selenium transferase</fullName>
        <ecNumber evidence="1">2.9.1.1</ecNumber>
    </recommendedName>
    <alternativeName>
        <fullName evidence="1">Selenocysteine synthase</fullName>
        <shortName evidence="1">Sec synthase</shortName>
    </alternativeName>
    <alternativeName>
        <fullName evidence="1">Selenocysteinyl-tRNA(Sec) synthase</fullName>
    </alternativeName>
</protein>
<proteinExistence type="inferred from homology"/>
<dbReference type="EC" id="2.9.1.1" evidence="1"/>
<dbReference type="EMBL" id="CP000964">
    <property type="protein sequence ID" value="ACI10056.1"/>
    <property type="molecule type" value="Genomic_DNA"/>
</dbReference>
<dbReference type="SMR" id="B5XMW1"/>
<dbReference type="KEGG" id="kpe:KPK_0157"/>
<dbReference type="HOGENOM" id="CLU_038142_1_0_6"/>
<dbReference type="UniPathway" id="UPA00906">
    <property type="reaction ID" value="UER00896"/>
</dbReference>
<dbReference type="Proteomes" id="UP000001734">
    <property type="component" value="Chromosome"/>
</dbReference>
<dbReference type="GO" id="GO:0005737">
    <property type="term" value="C:cytoplasm"/>
    <property type="evidence" value="ECO:0007669"/>
    <property type="project" value="UniProtKB-SubCell"/>
</dbReference>
<dbReference type="GO" id="GO:0004125">
    <property type="term" value="F:L-seryl-tRNA(Sec) selenium transferase activity"/>
    <property type="evidence" value="ECO:0007669"/>
    <property type="project" value="UniProtKB-UniRule"/>
</dbReference>
<dbReference type="GO" id="GO:0001717">
    <property type="term" value="P:conversion of seryl-tRNAsec to selenocys-tRNAsec"/>
    <property type="evidence" value="ECO:0007669"/>
    <property type="project" value="UniProtKB-UniRule"/>
</dbReference>
<dbReference type="GO" id="GO:0001514">
    <property type="term" value="P:selenocysteine incorporation"/>
    <property type="evidence" value="ECO:0007669"/>
    <property type="project" value="UniProtKB-UniRule"/>
</dbReference>
<dbReference type="FunFam" id="3.40.640.10:FF:000028">
    <property type="entry name" value="L-seryl-tRNA(Sec) selenium transferase"/>
    <property type="match status" value="1"/>
</dbReference>
<dbReference type="Gene3D" id="3.90.1150.180">
    <property type="match status" value="1"/>
</dbReference>
<dbReference type="Gene3D" id="3.40.640.10">
    <property type="entry name" value="Type I PLP-dependent aspartate aminotransferase-like (Major domain)"/>
    <property type="match status" value="1"/>
</dbReference>
<dbReference type="HAMAP" id="MF_00423">
    <property type="entry name" value="SelA"/>
    <property type="match status" value="1"/>
</dbReference>
<dbReference type="InterPro" id="IPR015424">
    <property type="entry name" value="PyrdxlP-dep_Trfase"/>
</dbReference>
<dbReference type="InterPro" id="IPR015421">
    <property type="entry name" value="PyrdxlP-dep_Trfase_major"/>
</dbReference>
<dbReference type="InterPro" id="IPR018319">
    <property type="entry name" value="SelA-like"/>
</dbReference>
<dbReference type="InterPro" id="IPR004534">
    <property type="entry name" value="SelA_trans"/>
</dbReference>
<dbReference type="InterPro" id="IPR025862">
    <property type="entry name" value="SelA_trans_N_dom"/>
</dbReference>
<dbReference type="NCBIfam" id="TIGR00474">
    <property type="entry name" value="selA"/>
    <property type="match status" value="1"/>
</dbReference>
<dbReference type="PANTHER" id="PTHR32328">
    <property type="entry name" value="L-SERYL-TRNA(SEC) SELENIUM TRANSFERASE"/>
    <property type="match status" value="1"/>
</dbReference>
<dbReference type="PANTHER" id="PTHR32328:SF0">
    <property type="entry name" value="L-SERYL-TRNA(SEC) SELENIUM TRANSFERASE"/>
    <property type="match status" value="1"/>
</dbReference>
<dbReference type="Pfam" id="PF12390">
    <property type="entry name" value="Se-cys_synth_N"/>
    <property type="match status" value="1"/>
</dbReference>
<dbReference type="Pfam" id="PF03841">
    <property type="entry name" value="SelA"/>
    <property type="match status" value="1"/>
</dbReference>
<dbReference type="SUPFAM" id="SSF53383">
    <property type="entry name" value="PLP-dependent transferases"/>
    <property type="match status" value="1"/>
</dbReference>
<accession>B5XMW1</accession>
<gene>
    <name evidence="1" type="primary">selA</name>
    <name type="ordered locus">KPK_0157</name>
</gene>
<name>SELA_KLEP3</name>
<keyword id="KW-0963">Cytoplasm</keyword>
<keyword id="KW-0648">Protein biosynthesis</keyword>
<keyword id="KW-0663">Pyridoxal phosphate</keyword>
<keyword id="KW-0711">Selenium</keyword>
<keyword id="KW-0808">Transferase</keyword>
<comment type="function">
    <text evidence="1">Converts seryl-tRNA(Sec) to selenocysteinyl-tRNA(Sec) required for selenoprotein biosynthesis.</text>
</comment>
<comment type="catalytic activity">
    <reaction evidence="1">
        <text>L-seryl-tRNA(Sec) + selenophosphate + H(+) = L-selenocysteinyl-tRNA(Sec) + phosphate</text>
        <dbReference type="Rhea" id="RHEA:22728"/>
        <dbReference type="Rhea" id="RHEA-COMP:9742"/>
        <dbReference type="Rhea" id="RHEA-COMP:9743"/>
        <dbReference type="ChEBI" id="CHEBI:15378"/>
        <dbReference type="ChEBI" id="CHEBI:16144"/>
        <dbReference type="ChEBI" id="CHEBI:43474"/>
        <dbReference type="ChEBI" id="CHEBI:78533"/>
        <dbReference type="ChEBI" id="CHEBI:78573"/>
        <dbReference type="EC" id="2.9.1.1"/>
    </reaction>
</comment>
<comment type="cofactor">
    <cofactor evidence="1">
        <name>pyridoxal 5'-phosphate</name>
        <dbReference type="ChEBI" id="CHEBI:597326"/>
    </cofactor>
</comment>
<comment type="pathway">
    <text evidence="1">Aminoacyl-tRNA biosynthesis; selenocysteinyl-tRNA(Sec) biosynthesis; selenocysteinyl-tRNA(Sec) from L-seryl-tRNA(Sec) (bacterial route): step 1/1.</text>
</comment>
<comment type="subunit">
    <text evidence="1">Homodecamer; pentamer of dimers. Binds only one seryl-tRNA(Sec) per dimer.</text>
</comment>
<comment type="subcellular location">
    <subcellularLocation>
        <location evidence="1">Cytoplasm</location>
    </subcellularLocation>
</comment>
<comment type="similarity">
    <text evidence="1">Belongs to the SelA family.</text>
</comment>
<sequence>MTTDIRALYTRLPAIDRLLRDPAFSPLLAQHGHSQVVAQLRQMLDEAREQISQRQTLPDWSHDWLHACEQRLTAGQRSALRPVFNLTGTVLHTNLGRAIQAESAVEAVASAMRAPVTLEYDLDDAGRGHRDRAIADLLCQITGAEDACIVNNNAAAVLLMLAATASGREVVVSRGELVEIGGAFRIPDVMRQAGCQLHEVGTTNRTHAKDYRQAVNDNTALLMKVHTSNYSIEGFTKAVDEAELAAIGRELDIPVVADLGSGSLVDLSQYGLPKEPMPQEMIAAGVSLVSFSGDKLLGGPQAGIIVGKRALIARLQSHPLKRALRADKMTLAALEATLRLYQHPEVLTERLPTLRLLTRPAEEIRRLAERLLPDLAAHYADFAVSVAACQSQIGSGSLPVDRLPSAALTFTPHDGRGSRLEALAARWRALPCPVIGRIDDGRLWLDLRCLEDETRFMEMLLR</sequence>
<evidence type="ECO:0000255" key="1">
    <source>
        <dbReference type="HAMAP-Rule" id="MF_00423"/>
    </source>
</evidence>
<feature type="chain" id="PRO_1000124146" description="L-seryl-tRNA(Sec) selenium transferase">
    <location>
        <begin position="1"/>
        <end position="462"/>
    </location>
</feature>
<feature type="modified residue" description="N6-(pyridoxal phosphate)lysine" evidence="1">
    <location>
        <position position="295"/>
    </location>
</feature>